<accession>Q9FJM5</accession>
<accession>Q8L9I8</accession>
<organism>
    <name type="scientific">Arabidopsis thaliana</name>
    <name type="common">Mouse-ear cress</name>
    <dbReference type="NCBI Taxonomy" id="3702"/>
    <lineage>
        <taxon>Eukaryota</taxon>
        <taxon>Viridiplantae</taxon>
        <taxon>Streptophyta</taxon>
        <taxon>Embryophyta</taxon>
        <taxon>Tracheophyta</taxon>
        <taxon>Spermatophyta</taxon>
        <taxon>Magnoliopsida</taxon>
        <taxon>eudicotyledons</taxon>
        <taxon>Gunneridae</taxon>
        <taxon>Pentapetalae</taxon>
        <taxon>rosids</taxon>
        <taxon>malvids</taxon>
        <taxon>Brassicales</taxon>
        <taxon>Brassicaceae</taxon>
        <taxon>Camelineae</taxon>
        <taxon>Arabidopsis</taxon>
    </lineage>
</organism>
<sequence length="273" mass="30321">MAATTLYNSCLLQPKYGFTTRRLNQSLVNSLTNPTRVSVLWKSRRDVIAKASIEMAESNSISSVVVNSSGPIIVIDNYDSFTYNLCQYMGELGCHFEVYRNDELTVEELKRKKPRGLLISPGPGTPQDSGISLQTVLELGPLVPLFGVCMGLQCIGEAFGGKIVRSPFGVMHGKSSMVHYDEKGEEGLFSGLSNPFLVGRYHSLVIEKDSFPSDELEVTAWTEDGLVMAARHRKYKHIQGVQFHPESIITTEGKTIVRNFIKLVEKKESEKLA</sequence>
<evidence type="ECO:0000250" key="1"/>
<evidence type="ECO:0000255" key="2"/>
<evidence type="ECO:0000255" key="3">
    <source>
        <dbReference type="PROSITE-ProRule" id="PRU00605"/>
    </source>
</evidence>
<evidence type="ECO:0000305" key="4"/>
<comment type="function">
    <text evidence="1">Part of a heterotetrameric complex that catalyzes the two-step biosynthesis of anthranilate, an intermediate in the biosynthesis of L-tryptophan. In the first step, the glutamine-binding beta subunit of anthranilate synthase (AS) provides the glutamine amidotransferase activity which generates ammonia as a substrate that, along with chorismate, is used in the second step, catalyzed by the large alpha subunit of AS to produce anthranilate (By similarity).</text>
</comment>
<comment type="catalytic activity">
    <reaction>
        <text>chorismate + L-glutamine = anthranilate + pyruvate + L-glutamate + H(+)</text>
        <dbReference type="Rhea" id="RHEA:21732"/>
        <dbReference type="ChEBI" id="CHEBI:15361"/>
        <dbReference type="ChEBI" id="CHEBI:15378"/>
        <dbReference type="ChEBI" id="CHEBI:16567"/>
        <dbReference type="ChEBI" id="CHEBI:29748"/>
        <dbReference type="ChEBI" id="CHEBI:29985"/>
        <dbReference type="ChEBI" id="CHEBI:58359"/>
        <dbReference type="EC" id="4.1.3.27"/>
    </reaction>
</comment>
<comment type="activity regulation">
    <text evidence="1">Feedback inhibition by tryptophan.</text>
</comment>
<comment type="pathway">
    <text>Amino-acid biosynthesis; L-tryptophan biosynthesis; L-tryptophan from chorismate: step 1/5.</text>
</comment>
<comment type="subunit">
    <text evidence="1">Heterotetramer consisting of two non-identical subunits: a beta subunit and a large alpha subunit.</text>
</comment>
<comment type="subcellular location">
    <subcellularLocation>
        <location evidence="4">Plastid</location>
        <location evidence="4">Chloroplast</location>
    </subcellularLocation>
</comment>
<proteinExistence type="evidence at transcript level"/>
<dbReference type="EC" id="4.1.3.27"/>
<dbReference type="EMBL" id="AB013396">
    <property type="protein sequence ID" value="BAB08859.1"/>
    <property type="molecule type" value="Genomic_DNA"/>
</dbReference>
<dbReference type="EMBL" id="CP002688">
    <property type="protein sequence ID" value="AED96968.1"/>
    <property type="molecule type" value="Genomic_DNA"/>
</dbReference>
<dbReference type="EMBL" id="BT024903">
    <property type="protein sequence ID" value="ABD91494.1"/>
    <property type="molecule type" value="mRNA"/>
</dbReference>
<dbReference type="EMBL" id="AY088407">
    <property type="protein sequence ID" value="AAM65944.1"/>
    <property type="molecule type" value="mRNA"/>
</dbReference>
<dbReference type="RefSeq" id="NP_200597.1">
    <property type="nucleotide sequence ID" value="NM_125174.2"/>
</dbReference>
<dbReference type="SMR" id="Q9FJM5"/>
<dbReference type="BioGRID" id="21144">
    <property type="interactions" value="1"/>
</dbReference>
<dbReference type="FunCoup" id="Q9FJM5">
    <property type="interactions" value="266"/>
</dbReference>
<dbReference type="STRING" id="3702.Q9FJM5"/>
<dbReference type="MEROPS" id="C26.A09"/>
<dbReference type="PaxDb" id="3702-AT5G57890.1"/>
<dbReference type="ProteomicsDB" id="246501"/>
<dbReference type="EnsemblPlants" id="AT5G57890.1">
    <property type="protein sequence ID" value="AT5G57890.1"/>
    <property type="gene ID" value="AT5G57890"/>
</dbReference>
<dbReference type="GeneID" id="835900"/>
<dbReference type="Gramene" id="AT5G57890.1">
    <property type="protein sequence ID" value="AT5G57890.1"/>
    <property type="gene ID" value="AT5G57890"/>
</dbReference>
<dbReference type="KEGG" id="ath:AT5G57890"/>
<dbReference type="Araport" id="AT5G57890"/>
<dbReference type="TAIR" id="AT5G57890"/>
<dbReference type="eggNOG" id="KOG0026">
    <property type="taxonomic scope" value="Eukaryota"/>
</dbReference>
<dbReference type="HOGENOM" id="CLU_014340_1_3_1"/>
<dbReference type="InParanoid" id="Q9FJM5"/>
<dbReference type="OMA" id="IGLYHSW"/>
<dbReference type="OrthoDB" id="524799at2759"/>
<dbReference type="PhylomeDB" id="Q9FJM5"/>
<dbReference type="BioCyc" id="ARA:AT5G57890-MONOMER"/>
<dbReference type="UniPathway" id="UPA00035">
    <property type="reaction ID" value="UER00040"/>
</dbReference>
<dbReference type="PRO" id="PR:Q9FJM5"/>
<dbReference type="Proteomes" id="UP000006548">
    <property type="component" value="Chromosome 5"/>
</dbReference>
<dbReference type="ExpressionAtlas" id="Q9FJM5">
    <property type="expression patterns" value="baseline and differential"/>
</dbReference>
<dbReference type="GO" id="GO:0009507">
    <property type="term" value="C:chloroplast"/>
    <property type="evidence" value="ECO:0007669"/>
    <property type="project" value="UniProtKB-SubCell"/>
</dbReference>
<dbReference type="GO" id="GO:0004049">
    <property type="term" value="F:anthranilate synthase activity"/>
    <property type="evidence" value="ECO:0007669"/>
    <property type="project" value="UniProtKB-EC"/>
</dbReference>
<dbReference type="GO" id="GO:0000162">
    <property type="term" value="P:L-tryptophan biosynthetic process"/>
    <property type="evidence" value="ECO:0007669"/>
    <property type="project" value="UniProtKB-UniPathway"/>
</dbReference>
<dbReference type="CDD" id="cd01743">
    <property type="entry name" value="GATase1_Anthranilate_Synthase"/>
    <property type="match status" value="1"/>
</dbReference>
<dbReference type="FunFam" id="3.40.50.880:FF:000027">
    <property type="entry name" value="Anthranilate synthase beta subunit 1"/>
    <property type="match status" value="1"/>
</dbReference>
<dbReference type="Gene3D" id="3.40.50.880">
    <property type="match status" value="1"/>
</dbReference>
<dbReference type="InterPro" id="IPR050472">
    <property type="entry name" value="Anth_synth/Amidotransfase"/>
</dbReference>
<dbReference type="InterPro" id="IPR029062">
    <property type="entry name" value="Class_I_gatase-like"/>
</dbReference>
<dbReference type="InterPro" id="IPR017926">
    <property type="entry name" value="GATASE"/>
</dbReference>
<dbReference type="InterPro" id="IPR006221">
    <property type="entry name" value="TrpG/PapA_dom"/>
</dbReference>
<dbReference type="NCBIfam" id="TIGR00566">
    <property type="entry name" value="trpG_papA"/>
    <property type="match status" value="1"/>
</dbReference>
<dbReference type="PANTHER" id="PTHR43418:SF4">
    <property type="entry name" value="MULTIFUNCTIONAL TRYPTOPHAN BIOSYNTHESIS PROTEIN"/>
    <property type="match status" value="1"/>
</dbReference>
<dbReference type="PANTHER" id="PTHR43418">
    <property type="entry name" value="MULTIFUNCTIONAL TRYPTOPHAN BIOSYNTHESIS PROTEIN-RELATED"/>
    <property type="match status" value="1"/>
</dbReference>
<dbReference type="Pfam" id="PF00117">
    <property type="entry name" value="GATase"/>
    <property type="match status" value="1"/>
</dbReference>
<dbReference type="PRINTS" id="PR00097">
    <property type="entry name" value="ANTSNTHASEII"/>
</dbReference>
<dbReference type="PRINTS" id="PR00099">
    <property type="entry name" value="CPSGATASE"/>
</dbReference>
<dbReference type="PRINTS" id="PR00096">
    <property type="entry name" value="GATASE"/>
</dbReference>
<dbReference type="SUPFAM" id="SSF52317">
    <property type="entry name" value="Class I glutamine amidotransferase-like"/>
    <property type="match status" value="1"/>
</dbReference>
<dbReference type="PROSITE" id="PS51273">
    <property type="entry name" value="GATASE_TYPE_1"/>
    <property type="match status" value="1"/>
</dbReference>
<name>ASB2_ARATH</name>
<gene>
    <name type="primary">ASB2</name>
    <name type="ordered locus">At5g57890</name>
</gene>
<feature type="transit peptide" description="Chloroplast" evidence="2">
    <location>
        <begin position="1"/>
        <end position="36"/>
    </location>
</feature>
<feature type="chain" id="PRO_0000425666" description="Anthranilate synthase beta subunit 2, chloroplastic">
    <location>
        <begin position="37"/>
        <end position="273"/>
    </location>
</feature>
<feature type="domain" description="Glutamine amidotransferase type-1" evidence="3">
    <location>
        <begin position="71"/>
        <end position="270"/>
    </location>
</feature>
<feature type="active site" description="Nucleophile" evidence="3">
    <location>
        <position position="149"/>
    </location>
</feature>
<feature type="active site" evidence="3">
    <location>
        <position position="244"/>
    </location>
</feature>
<feature type="active site" evidence="3">
    <location>
        <position position="246"/>
    </location>
</feature>
<feature type="sequence conflict" description="In Ref. 4; AAM65944." evidence="4" ref="4">
    <original>S</original>
    <variation>P</variation>
    <location>
        <position position="30"/>
    </location>
</feature>
<keyword id="KW-0028">Amino-acid biosynthesis</keyword>
<keyword id="KW-0057">Aromatic amino acid biosynthesis</keyword>
<keyword id="KW-0150">Chloroplast</keyword>
<keyword id="KW-0315">Glutamine amidotransferase</keyword>
<keyword id="KW-0456">Lyase</keyword>
<keyword id="KW-0934">Plastid</keyword>
<keyword id="KW-1185">Reference proteome</keyword>
<keyword id="KW-0809">Transit peptide</keyword>
<keyword id="KW-0822">Tryptophan biosynthesis</keyword>
<reference key="1">
    <citation type="journal article" date="1998" name="DNA Res.">
        <title>Structural analysis of Arabidopsis thaliana chromosome 5. VI. Sequence features of the regions of 1,367,185 bp covered by 19 physically assigned P1 and TAC clones.</title>
        <authorList>
            <person name="Kotani H."/>
            <person name="Nakamura Y."/>
            <person name="Sato S."/>
            <person name="Asamizu E."/>
            <person name="Kaneko T."/>
            <person name="Miyajima N."/>
            <person name="Tabata S."/>
        </authorList>
    </citation>
    <scope>NUCLEOTIDE SEQUENCE [LARGE SCALE GENOMIC DNA]</scope>
    <source>
        <strain>cv. Columbia</strain>
    </source>
</reference>
<reference key="2">
    <citation type="journal article" date="2017" name="Plant J.">
        <title>Araport11: a complete reannotation of the Arabidopsis thaliana reference genome.</title>
        <authorList>
            <person name="Cheng C.Y."/>
            <person name="Krishnakumar V."/>
            <person name="Chan A.P."/>
            <person name="Thibaud-Nissen F."/>
            <person name="Schobel S."/>
            <person name="Town C.D."/>
        </authorList>
    </citation>
    <scope>GENOME REANNOTATION</scope>
    <source>
        <strain>cv. Columbia</strain>
    </source>
</reference>
<reference key="3">
    <citation type="submission" date="2006-03" db="EMBL/GenBank/DDBJ databases">
        <title>Arabidopsis ORF clones.</title>
        <authorList>
            <person name="Shinn P."/>
            <person name="Chen H."/>
            <person name="Kim C.J."/>
            <person name="Ecker J.R."/>
        </authorList>
    </citation>
    <scope>NUCLEOTIDE SEQUENCE [LARGE SCALE MRNA]</scope>
</reference>
<reference key="4">
    <citation type="submission" date="2002-03" db="EMBL/GenBank/DDBJ databases">
        <title>Full-length cDNA from Arabidopsis thaliana.</title>
        <authorList>
            <person name="Brover V.V."/>
            <person name="Troukhan M.E."/>
            <person name="Alexandrov N.A."/>
            <person name="Lu Y.-P."/>
            <person name="Flavell R.B."/>
            <person name="Feldmann K.A."/>
        </authorList>
    </citation>
    <scope>NUCLEOTIDE SEQUENCE [LARGE SCALE MRNA]</scope>
</reference>
<protein>
    <recommendedName>
        <fullName>Anthranilate synthase beta subunit 2, chloroplastic</fullName>
        <ecNumber>4.1.3.27</ecNumber>
    </recommendedName>
    <alternativeName>
        <fullName>Anthranilate synthase component 2-2</fullName>
    </alternativeName>
    <alternativeName>
        <fullName>Anthranilate synthase, glutamine amidotransferase component 2-2</fullName>
    </alternativeName>
</protein>